<sequence length="352" mass="38784">MAACVPPGEAPRSASGTPTRRQVTIVRIYLDGVYGIGKSTTGRVMASAASGGSPTLYFPEPMAYWRTLFETDVISGIYDTQNRKQQGNLAVDDAALITAHYQSRFTTPYLILHDHTCTLFGGNSLQRGTQPDLTLVFDRHPVASTVCFPAARYLLGDMSMCALMAMVATLPREPQGGNIVVTTLNVEEHIRRLRTRARIGEQIDITLIATLRNVYFMLVNTCHFLRSGRVWRDGWGELPTSCGAYKHRATQMDAFQERVSPELGDTLFALFKTQELLDDRGVILEVHAWALDALMLKLRNLNVFSADLSGTPRQCAAVVESLLPLMSSTLSDFDSASALERAARTFNAEMGV</sequence>
<organism>
    <name type="scientific">Equine herpesvirus 4 (strain 1942)</name>
    <name type="common">EHV-4</name>
    <name type="synonym">Equine rhinopneumonitis virus</name>
    <dbReference type="NCBI Taxonomy" id="10333"/>
    <lineage>
        <taxon>Viruses</taxon>
        <taxon>Duplodnaviria</taxon>
        <taxon>Heunggongvirae</taxon>
        <taxon>Peploviricota</taxon>
        <taxon>Herviviricetes</taxon>
        <taxon>Herpesvirales</taxon>
        <taxon>Orthoherpesviridae</taxon>
        <taxon>Alphaherpesvirinae</taxon>
        <taxon>Varicellovirus</taxon>
        <taxon>Varicellovirus equidalpha4</taxon>
        <taxon>Equid alphaherpesvirus 4</taxon>
    </lineage>
</organism>
<dbReference type="EC" id="2.7.1.21" evidence="1"/>
<dbReference type="EMBL" id="D14486">
    <property type="protein sequence ID" value="BAA03378.1"/>
    <property type="molecule type" value="Genomic_DNA"/>
</dbReference>
<dbReference type="PIR" id="A36657">
    <property type="entry name" value="KIBEE4"/>
</dbReference>
<dbReference type="PDB" id="1P6X">
    <property type="method" value="X-ray"/>
    <property type="resolution" value="2.00 A"/>
    <property type="chains" value="A/B=23-352"/>
</dbReference>
<dbReference type="PDB" id="1P72">
    <property type="method" value="X-ray"/>
    <property type="resolution" value="2.10 A"/>
    <property type="chains" value="A/B=23-352"/>
</dbReference>
<dbReference type="PDB" id="1P73">
    <property type="method" value="X-ray"/>
    <property type="resolution" value="2.70 A"/>
    <property type="chains" value="A/B/C/D=23-352"/>
</dbReference>
<dbReference type="PDB" id="1P75">
    <property type="method" value="X-ray"/>
    <property type="resolution" value="3.02 A"/>
    <property type="chains" value="A/B/C/D=23-352"/>
</dbReference>
<dbReference type="PDBsum" id="1P6X"/>
<dbReference type="PDBsum" id="1P72"/>
<dbReference type="PDBsum" id="1P73"/>
<dbReference type="PDBsum" id="1P75"/>
<dbReference type="SMR" id="P24425"/>
<dbReference type="DrugBank" id="DB03280">
    <property type="generic name" value="p1-(5'-adenosyl)p5-(5'-thymidyl)pentaphosphate"/>
</dbReference>
<dbReference type="DrugBank" id="DB04485">
    <property type="generic name" value="Thymidine"/>
</dbReference>
<dbReference type="EvolutionaryTrace" id="P24425"/>
<dbReference type="GO" id="GO:0005524">
    <property type="term" value="F:ATP binding"/>
    <property type="evidence" value="ECO:0007669"/>
    <property type="project" value="UniProtKB-KW"/>
</dbReference>
<dbReference type="GO" id="GO:0004797">
    <property type="term" value="F:thymidine kinase activity"/>
    <property type="evidence" value="ECO:0007669"/>
    <property type="project" value="UniProtKB-EC"/>
</dbReference>
<dbReference type="GO" id="GO:0071897">
    <property type="term" value="P:DNA biosynthetic process"/>
    <property type="evidence" value="ECO:0007669"/>
    <property type="project" value="UniProtKB-KW"/>
</dbReference>
<dbReference type="GO" id="GO:0006230">
    <property type="term" value="P:TMP biosynthetic process"/>
    <property type="evidence" value="ECO:0007669"/>
    <property type="project" value="InterPro"/>
</dbReference>
<dbReference type="Gene3D" id="3.40.50.300">
    <property type="entry name" value="P-loop containing nucleotide triphosphate hydrolases"/>
    <property type="match status" value="1"/>
</dbReference>
<dbReference type="HAMAP" id="MF_04029">
    <property type="entry name" value="HSV_KITH"/>
    <property type="match status" value="1"/>
</dbReference>
<dbReference type="InterPro" id="IPR001889">
    <property type="entry name" value="Herpes_TK"/>
</dbReference>
<dbReference type="InterPro" id="IPR027417">
    <property type="entry name" value="P-loop_NTPase"/>
</dbReference>
<dbReference type="Pfam" id="PF00693">
    <property type="entry name" value="Herpes_TK"/>
    <property type="match status" value="1"/>
</dbReference>
<dbReference type="SUPFAM" id="SSF52540">
    <property type="entry name" value="P-loop containing nucleoside triphosphate hydrolases"/>
    <property type="match status" value="1"/>
</dbReference>
<keyword id="KW-0002">3D-structure</keyword>
<keyword id="KW-0067">ATP-binding</keyword>
<keyword id="KW-0237">DNA synthesis</keyword>
<keyword id="KW-0244">Early protein</keyword>
<keyword id="KW-0418">Kinase</keyword>
<keyword id="KW-0547">Nucleotide-binding</keyword>
<keyword id="KW-0808">Transferase</keyword>
<gene>
    <name evidence="1" type="primary">TK</name>
</gene>
<feature type="chain" id="PRO_0000175067" description="Thymidine kinase">
    <location>
        <begin position="1"/>
        <end position="352"/>
    </location>
</feature>
<feature type="active site" description="Proton acceptor" evidence="1">
    <location>
        <position position="60"/>
    </location>
</feature>
<feature type="binding site" evidence="1 2 3">
    <location>
        <begin position="32"/>
        <end position="39"/>
    </location>
    <ligand>
        <name>ATP</name>
        <dbReference type="ChEBI" id="CHEBI:30616"/>
    </ligand>
</feature>
<feature type="binding site" evidence="1 2 3">
    <location>
        <position position="78"/>
    </location>
    <ligand>
        <name>substrate</name>
    </ligand>
</feature>
<feature type="binding site" evidence="1 2 3">
    <location>
        <position position="102"/>
    </location>
    <ligand>
        <name>substrate</name>
    </ligand>
</feature>
<feature type="binding site" evidence="2 3">
    <location>
        <position position="105"/>
    </location>
    <ligand>
        <name>substrate</name>
    </ligand>
</feature>
<feature type="binding site" evidence="2 3">
    <location>
        <position position="148"/>
    </location>
    <ligand>
        <name>substrate</name>
    </ligand>
</feature>
<feature type="binding site" evidence="1 2 3">
    <location>
        <position position="192"/>
    </location>
    <ligand>
        <name>ATP</name>
        <dbReference type="ChEBI" id="CHEBI:30616"/>
    </ligand>
</feature>
<feature type="binding site" evidence="1">
    <location>
        <position position="198"/>
    </location>
    <ligand>
        <name>substrate</name>
    </ligand>
</feature>
<feature type="strand" evidence="4">
    <location>
        <begin position="23"/>
        <end position="31"/>
    </location>
</feature>
<feature type="helix" evidence="4">
    <location>
        <begin position="38"/>
        <end position="46"/>
    </location>
</feature>
<feature type="helix" evidence="4">
    <location>
        <begin position="48"/>
        <end position="50"/>
    </location>
</feature>
<feature type="strand" evidence="4">
    <location>
        <begin position="55"/>
        <end position="58"/>
    </location>
</feature>
<feature type="helix" evidence="4">
    <location>
        <begin position="62"/>
        <end position="66"/>
    </location>
</feature>
<feature type="strand" evidence="4">
    <location>
        <begin position="68"/>
        <end position="71"/>
    </location>
</feature>
<feature type="helix" evidence="4">
    <location>
        <begin position="73"/>
        <end position="86"/>
    </location>
</feature>
<feature type="helix" evidence="4">
    <location>
        <begin position="91"/>
        <end position="117"/>
    </location>
</feature>
<feature type="strand" evidence="4">
    <location>
        <begin position="122"/>
        <end position="125"/>
    </location>
</feature>
<feature type="strand" evidence="4">
    <location>
        <begin position="132"/>
        <end position="139"/>
    </location>
</feature>
<feature type="helix" evidence="4">
    <location>
        <begin position="142"/>
        <end position="145"/>
    </location>
</feature>
<feature type="helix" evidence="4">
    <location>
        <begin position="147"/>
        <end position="154"/>
    </location>
</feature>
<feature type="helix" evidence="4">
    <location>
        <begin position="160"/>
        <end position="167"/>
    </location>
</feature>
<feature type="strand" evidence="4">
    <location>
        <begin position="177"/>
        <end position="183"/>
    </location>
</feature>
<feature type="helix" evidence="4">
    <location>
        <begin position="186"/>
        <end position="196"/>
    </location>
</feature>
<feature type="helix" evidence="4">
    <location>
        <begin position="205"/>
        <end position="226"/>
    </location>
</feature>
<feature type="turn" evidence="4">
    <location>
        <begin position="231"/>
        <end position="237"/>
    </location>
</feature>
<feature type="helix" evidence="4">
    <location>
        <begin position="243"/>
        <end position="249"/>
    </location>
</feature>
<feature type="helix" evidence="4">
    <location>
        <begin position="263"/>
        <end position="265"/>
    </location>
</feature>
<feature type="helix" evidence="4">
    <location>
        <begin position="267"/>
        <end position="271"/>
    </location>
</feature>
<feature type="helix" evidence="4">
    <location>
        <begin position="274"/>
        <end position="276"/>
    </location>
</feature>
<feature type="helix" evidence="4">
    <location>
        <begin position="285"/>
        <end position="298"/>
    </location>
</feature>
<feature type="strand" evidence="4">
    <location>
        <begin position="301"/>
        <end position="307"/>
    </location>
</feature>
<feature type="helix" evidence="4">
    <location>
        <begin position="312"/>
        <end position="320"/>
    </location>
</feature>
<feature type="helix" evidence="4">
    <location>
        <begin position="321"/>
        <end position="325"/>
    </location>
</feature>
<feature type="strand" evidence="4">
    <location>
        <begin position="328"/>
        <end position="332"/>
    </location>
</feature>
<feature type="helix" evidence="4">
    <location>
        <begin position="333"/>
        <end position="350"/>
    </location>
</feature>
<reference key="1">
    <citation type="journal article" date="1990" name="J. Gen. Virol.">
        <title>The nucleotide sequence of the equine herpesvirus 4 thymidine kinase gene.</title>
        <authorList>
            <person name="Nicolson L."/>
            <person name="Cullinane A.A."/>
            <person name="Onions D.E."/>
        </authorList>
    </citation>
    <scope>NUCLEOTIDE SEQUENCE [GENOMIC DNA]</scope>
</reference>
<reference key="2">
    <citation type="journal article" date="2003" name="Structure">
        <title>Structural basis for the dual thymidine and thymidylate kinase activity of herpes thymidine kinases.</title>
        <authorList>
            <person name="Gardberg A."/>
            <person name="Shuvalova L."/>
            <person name="Monnerjahn C."/>
            <person name="Konrad M."/>
            <person name="Lavie A."/>
        </authorList>
    </citation>
    <scope>X-RAY CRYSTALLOGRAPHY (2.0 ANGSTROMS) OF 23-352 IN COMPLEXES WITH THYMIDINE; ADP AND BISUBSTRATE ANALOGS</scope>
    <scope>ACTIVE SITE</scope>
    <scope>CATALYTIC ACTIVITY</scope>
    <scope>SUBUNIT</scope>
</reference>
<evidence type="ECO:0000255" key="1">
    <source>
        <dbReference type="HAMAP-Rule" id="MF_04029"/>
    </source>
</evidence>
<evidence type="ECO:0000269" key="2">
    <source>
    </source>
</evidence>
<evidence type="ECO:0007744" key="3">
    <source>
        <dbReference type="PDB" id="1P72"/>
    </source>
</evidence>
<evidence type="ECO:0007829" key="4">
    <source>
        <dbReference type="PDB" id="1P6X"/>
    </source>
</evidence>
<organismHost>
    <name type="scientific">Equus caballus</name>
    <name type="common">Horse</name>
    <dbReference type="NCBI Taxonomy" id="9796"/>
</organismHost>
<name>KITH_EHV4</name>
<protein>
    <recommendedName>
        <fullName evidence="1">Thymidine kinase</fullName>
        <ecNumber evidence="1">2.7.1.21</ecNumber>
    </recommendedName>
</protein>
<accession>P24425</accession>
<proteinExistence type="evidence at protein level"/>
<comment type="function">
    <text evidence="1">Catalyzes the transfer of the gamma-phospho group of ATP to thymidine to generate dTMP in the salvage pathway of pyrimidine synthesis. The dTMP serves as a substrate for DNA polymerase during viral DNA replication. Allows the virus to be reactivated and to grow in non-proliferative cells lacking a high concentration of phosphorylated nucleic acid precursors.</text>
</comment>
<comment type="catalytic activity">
    <reaction evidence="1 2">
        <text>thymidine + ATP = dTMP + ADP + H(+)</text>
        <dbReference type="Rhea" id="RHEA:19129"/>
        <dbReference type="ChEBI" id="CHEBI:15378"/>
        <dbReference type="ChEBI" id="CHEBI:17748"/>
        <dbReference type="ChEBI" id="CHEBI:30616"/>
        <dbReference type="ChEBI" id="CHEBI:63528"/>
        <dbReference type="ChEBI" id="CHEBI:456216"/>
        <dbReference type="EC" id="2.7.1.21"/>
    </reaction>
</comment>
<comment type="subunit">
    <text evidence="1 2">Homodimer.</text>
</comment>
<comment type="similarity">
    <text evidence="1">Belongs to the herpesviridae thymidine kinase family.</text>
</comment>